<accession>P43748</accession>
<gene>
    <name type="primary">holB</name>
    <name type="ordered locus">HI_0455</name>
</gene>
<protein>
    <recommendedName>
        <fullName>DNA polymerase III subunit delta'</fullName>
        <ecNumber>2.7.7.7</ecNumber>
    </recommendedName>
</protein>
<comment type="function">
    <text evidence="1">DNA polymerase III is a complex, multichain enzyme responsible for most of the replicative synthesis in bacteria. This DNA polymerase also exhibits 3' to 5' exonuclease activity (By similarity).</text>
</comment>
<comment type="catalytic activity">
    <reaction>
        <text>DNA(n) + a 2'-deoxyribonucleoside 5'-triphosphate = DNA(n+1) + diphosphate</text>
        <dbReference type="Rhea" id="RHEA:22508"/>
        <dbReference type="Rhea" id="RHEA-COMP:17339"/>
        <dbReference type="Rhea" id="RHEA-COMP:17340"/>
        <dbReference type="ChEBI" id="CHEBI:33019"/>
        <dbReference type="ChEBI" id="CHEBI:61560"/>
        <dbReference type="ChEBI" id="CHEBI:173112"/>
        <dbReference type="EC" id="2.7.7.7"/>
    </reaction>
</comment>
<comment type="subunit">
    <text evidence="1">DNA polymerase III contains a core (composed of alpha, epsilon and theta chains) that associates with a tau subunit. This core dimerizes to form the POLIII' complex. PolIII' associates with the gamma complex (composed of gamma, delta, delta', psi and chi chains) and with the beta chain to form the complete DNA polymerase III complex (By similarity).</text>
</comment>
<sequence length="327" mass="37039">MTALYPWLMPIYHQIAQTFDEGLGHHAVLIKADSGLGVESLFNALAQKIMCVAQGDKPCGQCHSCHLMQAHSHPDYHELSPINGKDIGVDQVRDINEMVAQHAQQNGNKVVYVQGAERLTEAAANALLKTLEEPRPNTYFLLQADSSASLLATIYSRCQVWNLSVPNEEIAFEWLKSKSAVENQEILTALAMNLGRPLLALETLQEGFIEQRKNFLRQFWVFYRRRSPLELLPLFDKERYVQQVDWILAFLSDCLKHKLEIDSHRQVADLGRGIEQFSDEQTALGLLQAIKIMQKVRSDLLTINGVNVELMLLDGLTRLVTEVFETQ</sequence>
<reference key="1">
    <citation type="journal article" date="1995" name="Science">
        <title>Whole-genome random sequencing and assembly of Haemophilus influenzae Rd.</title>
        <authorList>
            <person name="Fleischmann R.D."/>
            <person name="Adams M.D."/>
            <person name="White O."/>
            <person name="Clayton R.A."/>
            <person name="Kirkness E.F."/>
            <person name="Kerlavage A.R."/>
            <person name="Bult C.J."/>
            <person name="Tomb J.-F."/>
            <person name="Dougherty B.A."/>
            <person name="Merrick J.M."/>
            <person name="McKenney K."/>
            <person name="Sutton G.G."/>
            <person name="FitzHugh W."/>
            <person name="Fields C.A."/>
            <person name="Gocayne J.D."/>
            <person name="Scott J.D."/>
            <person name="Shirley R."/>
            <person name="Liu L.-I."/>
            <person name="Glodek A."/>
            <person name="Kelley J.M."/>
            <person name="Weidman J.F."/>
            <person name="Phillips C.A."/>
            <person name="Spriggs T."/>
            <person name="Hedblom E."/>
            <person name="Cotton M.D."/>
            <person name="Utterback T.R."/>
            <person name="Hanna M.C."/>
            <person name="Nguyen D.T."/>
            <person name="Saudek D.M."/>
            <person name="Brandon R.C."/>
            <person name="Fine L.D."/>
            <person name="Fritchman J.L."/>
            <person name="Fuhrmann J.L."/>
            <person name="Geoghagen N.S.M."/>
            <person name="Gnehm C.L."/>
            <person name="McDonald L.A."/>
            <person name="Small K.V."/>
            <person name="Fraser C.M."/>
            <person name="Smith H.O."/>
            <person name="Venter J.C."/>
        </authorList>
    </citation>
    <scope>NUCLEOTIDE SEQUENCE [LARGE SCALE GENOMIC DNA]</scope>
    <source>
        <strain>ATCC 51907 / DSM 11121 / KW20 / Rd</strain>
    </source>
</reference>
<reference key="2">
    <citation type="submission" date="1996-09" db="EMBL/GenBank/DDBJ databases">
        <authorList>
            <person name="White O."/>
            <person name="Clayton R.A."/>
            <person name="Kerlavage A.R."/>
            <person name="Fleischmann R.D."/>
        </authorList>
    </citation>
    <scope>SEQUENCE REVISION</scope>
</reference>
<feature type="chain" id="PRO_0000105514" description="DNA polymerase III subunit delta'">
    <location>
        <begin position="1"/>
        <end position="327"/>
    </location>
</feature>
<organism>
    <name type="scientific">Haemophilus influenzae (strain ATCC 51907 / DSM 11121 / KW20 / Rd)</name>
    <dbReference type="NCBI Taxonomy" id="71421"/>
    <lineage>
        <taxon>Bacteria</taxon>
        <taxon>Pseudomonadati</taxon>
        <taxon>Pseudomonadota</taxon>
        <taxon>Gammaproteobacteria</taxon>
        <taxon>Pasteurellales</taxon>
        <taxon>Pasteurellaceae</taxon>
        <taxon>Haemophilus</taxon>
    </lineage>
</organism>
<proteinExistence type="inferred from homology"/>
<evidence type="ECO:0000250" key="1"/>
<name>HOLB_HAEIN</name>
<keyword id="KW-0235">DNA replication</keyword>
<keyword id="KW-0239">DNA-directed DNA polymerase</keyword>
<keyword id="KW-0548">Nucleotidyltransferase</keyword>
<keyword id="KW-1185">Reference proteome</keyword>
<keyword id="KW-0808">Transferase</keyword>
<dbReference type="EC" id="2.7.7.7"/>
<dbReference type="EMBL" id="L42023">
    <property type="protein sequence ID" value="AAC22113.1"/>
    <property type="molecule type" value="Genomic_DNA"/>
</dbReference>
<dbReference type="RefSeq" id="NP_438616.1">
    <property type="nucleotide sequence ID" value="NC_000907.1"/>
</dbReference>
<dbReference type="SMR" id="P43748"/>
<dbReference type="STRING" id="71421.HI_0455"/>
<dbReference type="EnsemblBacteria" id="AAC22113">
    <property type="protein sequence ID" value="AAC22113"/>
    <property type="gene ID" value="HI_0455"/>
</dbReference>
<dbReference type="KEGG" id="hin:HI_0455"/>
<dbReference type="PATRIC" id="fig|71421.8.peg.475"/>
<dbReference type="eggNOG" id="COG0470">
    <property type="taxonomic scope" value="Bacteria"/>
</dbReference>
<dbReference type="HOGENOM" id="CLU_006229_4_3_6"/>
<dbReference type="OrthoDB" id="9811073at2"/>
<dbReference type="PhylomeDB" id="P43748"/>
<dbReference type="BioCyc" id="HINF71421:G1GJ1-471-MONOMER"/>
<dbReference type="Proteomes" id="UP000000579">
    <property type="component" value="Chromosome"/>
</dbReference>
<dbReference type="GO" id="GO:0009360">
    <property type="term" value="C:DNA polymerase III complex"/>
    <property type="evidence" value="ECO:0000318"/>
    <property type="project" value="GO_Central"/>
</dbReference>
<dbReference type="GO" id="GO:0008408">
    <property type="term" value="F:3'-5' exonuclease activity"/>
    <property type="evidence" value="ECO:0007669"/>
    <property type="project" value="InterPro"/>
</dbReference>
<dbReference type="GO" id="GO:0003677">
    <property type="term" value="F:DNA binding"/>
    <property type="evidence" value="ECO:0007669"/>
    <property type="project" value="InterPro"/>
</dbReference>
<dbReference type="GO" id="GO:0003887">
    <property type="term" value="F:DNA-directed DNA polymerase activity"/>
    <property type="evidence" value="ECO:0007669"/>
    <property type="project" value="UniProtKB-KW"/>
</dbReference>
<dbReference type="GO" id="GO:0006261">
    <property type="term" value="P:DNA-templated DNA replication"/>
    <property type="evidence" value="ECO:0000318"/>
    <property type="project" value="GO_Central"/>
</dbReference>
<dbReference type="Gene3D" id="1.20.272.10">
    <property type="match status" value="1"/>
</dbReference>
<dbReference type="Gene3D" id="3.40.50.300">
    <property type="entry name" value="P-loop containing nucleotide triphosphate hydrolases"/>
    <property type="match status" value="1"/>
</dbReference>
<dbReference type="InterPro" id="IPR008921">
    <property type="entry name" value="DNA_pol3_clamp-load_cplx_C"/>
</dbReference>
<dbReference type="InterPro" id="IPR004622">
    <property type="entry name" value="DNA_pol_HolB"/>
</dbReference>
<dbReference type="InterPro" id="IPR015199">
    <property type="entry name" value="DNA_pol_III_delta_C"/>
</dbReference>
<dbReference type="InterPro" id="IPR050238">
    <property type="entry name" value="DNA_Rep/Repair_Clamp_Loader"/>
</dbReference>
<dbReference type="InterPro" id="IPR027417">
    <property type="entry name" value="P-loop_NTPase"/>
</dbReference>
<dbReference type="NCBIfam" id="TIGR00678">
    <property type="entry name" value="holB"/>
    <property type="match status" value="1"/>
</dbReference>
<dbReference type="NCBIfam" id="NF005362">
    <property type="entry name" value="PRK06871.1"/>
    <property type="match status" value="1"/>
</dbReference>
<dbReference type="PANTHER" id="PTHR11669:SF8">
    <property type="entry name" value="DNA POLYMERASE III SUBUNIT DELTA"/>
    <property type="match status" value="1"/>
</dbReference>
<dbReference type="PANTHER" id="PTHR11669">
    <property type="entry name" value="REPLICATION FACTOR C / DNA POLYMERASE III GAMMA-TAU SUBUNIT"/>
    <property type="match status" value="1"/>
</dbReference>
<dbReference type="Pfam" id="PF13177">
    <property type="entry name" value="DNA_pol3_delta2"/>
    <property type="match status" value="1"/>
</dbReference>
<dbReference type="Pfam" id="PF09115">
    <property type="entry name" value="DNApol3-delta_C"/>
    <property type="match status" value="1"/>
</dbReference>
<dbReference type="SUPFAM" id="SSF52540">
    <property type="entry name" value="P-loop containing nucleoside triphosphate hydrolases"/>
    <property type="match status" value="1"/>
</dbReference>
<dbReference type="SUPFAM" id="SSF48019">
    <property type="entry name" value="post-AAA+ oligomerization domain-like"/>
    <property type="match status" value="1"/>
</dbReference>